<protein>
    <recommendedName>
        <fullName evidence="1">tRNA-specific 2-thiouridylase MnmA</fullName>
        <ecNumber evidence="1">2.8.1.13</ecNumber>
    </recommendedName>
</protein>
<keyword id="KW-0067">ATP-binding</keyword>
<keyword id="KW-0963">Cytoplasm</keyword>
<keyword id="KW-1015">Disulfide bond</keyword>
<keyword id="KW-0547">Nucleotide-binding</keyword>
<keyword id="KW-1185">Reference proteome</keyword>
<keyword id="KW-0694">RNA-binding</keyword>
<keyword id="KW-0808">Transferase</keyword>
<keyword id="KW-0819">tRNA processing</keyword>
<keyword id="KW-0820">tRNA-binding</keyword>
<dbReference type="EC" id="2.8.1.13" evidence="1"/>
<dbReference type="EMBL" id="AE017226">
    <property type="protein sequence ID" value="AAS11183.1"/>
    <property type="molecule type" value="Genomic_DNA"/>
</dbReference>
<dbReference type="RefSeq" id="NP_971302.1">
    <property type="nucleotide sequence ID" value="NC_002967.9"/>
</dbReference>
<dbReference type="RefSeq" id="WP_002681913.1">
    <property type="nucleotide sequence ID" value="NC_002967.9"/>
</dbReference>
<dbReference type="SMR" id="Q73PV6"/>
<dbReference type="STRING" id="243275.TDE_0690"/>
<dbReference type="PaxDb" id="243275-TDE_0690"/>
<dbReference type="GeneID" id="2740249"/>
<dbReference type="KEGG" id="tde:TDE_0690"/>
<dbReference type="PATRIC" id="fig|243275.7.peg.670"/>
<dbReference type="eggNOG" id="COG0482">
    <property type="taxonomic scope" value="Bacteria"/>
</dbReference>
<dbReference type="HOGENOM" id="CLU_035188_0_0_12"/>
<dbReference type="OrthoDB" id="9800696at2"/>
<dbReference type="Proteomes" id="UP000008212">
    <property type="component" value="Chromosome"/>
</dbReference>
<dbReference type="GO" id="GO:0005737">
    <property type="term" value="C:cytoplasm"/>
    <property type="evidence" value="ECO:0007669"/>
    <property type="project" value="UniProtKB-SubCell"/>
</dbReference>
<dbReference type="GO" id="GO:0005524">
    <property type="term" value="F:ATP binding"/>
    <property type="evidence" value="ECO:0007669"/>
    <property type="project" value="UniProtKB-KW"/>
</dbReference>
<dbReference type="GO" id="GO:0000049">
    <property type="term" value="F:tRNA binding"/>
    <property type="evidence" value="ECO:0007669"/>
    <property type="project" value="UniProtKB-KW"/>
</dbReference>
<dbReference type="GO" id="GO:0103016">
    <property type="term" value="F:tRNA-uridine 2-sulfurtransferase activity"/>
    <property type="evidence" value="ECO:0007669"/>
    <property type="project" value="UniProtKB-EC"/>
</dbReference>
<dbReference type="GO" id="GO:0002143">
    <property type="term" value="P:tRNA wobble position uridine thiolation"/>
    <property type="evidence" value="ECO:0007669"/>
    <property type="project" value="TreeGrafter"/>
</dbReference>
<dbReference type="CDD" id="cd01998">
    <property type="entry name" value="MnmA_TRMU-like"/>
    <property type="match status" value="1"/>
</dbReference>
<dbReference type="FunFam" id="2.30.30.280:FF:000001">
    <property type="entry name" value="tRNA-specific 2-thiouridylase MnmA"/>
    <property type="match status" value="1"/>
</dbReference>
<dbReference type="Gene3D" id="2.30.30.280">
    <property type="entry name" value="Adenine nucleotide alpha hydrolases-like domains"/>
    <property type="match status" value="1"/>
</dbReference>
<dbReference type="Gene3D" id="3.40.50.620">
    <property type="entry name" value="HUPs"/>
    <property type="match status" value="1"/>
</dbReference>
<dbReference type="Gene3D" id="2.40.30.10">
    <property type="entry name" value="Translation factors"/>
    <property type="match status" value="1"/>
</dbReference>
<dbReference type="HAMAP" id="MF_00144">
    <property type="entry name" value="tRNA_thiouridyl_MnmA"/>
    <property type="match status" value="1"/>
</dbReference>
<dbReference type="InterPro" id="IPR004506">
    <property type="entry name" value="MnmA-like"/>
</dbReference>
<dbReference type="InterPro" id="IPR046885">
    <property type="entry name" value="MnmA-like_C"/>
</dbReference>
<dbReference type="InterPro" id="IPR046884">
    <property type="entry name" value="MnmA-like_central"/>
</dbReference>
<dbReference type="InterPro" id="IPR023382">
    <property type="entry name" value="MnmA-like_central_sf"/>
</dbReference>
<dbReference type="InterPro" id="IPR014729">
    <property type="entry name" value="Rossmann-like_a/b/a_fold"/>
</dbReference>
<dbReference type="NCBIfam" id="NF001138">
    <property type="entry name" value="PRK00143.1"/>
    <property type="match status" value="1"/>
</dbReference>
<dbReference type="NCBIfam" id="TIGR00420">
    <property type="entry name" value="trmU"/>
    <property type="match status" value="1"/>
</dbReference>
<dbReference type="PANTHER" id="PTHR11933:SF5">
    <property type="entry name" value="MITOCHONDRIAL TRNA-SPECIFIC 2-THIOURIDYLASE 1"/>
    <property type="match status" value="1"/>
</dbReference>
<dbReference type="PANTHER" id="PTHR11933">
    <property type="entry name" value="TRNA 5-METHYLAMINOMETHYL-2-THIOURIDYLATE -METHYLTRANSFERASE"/>
    <property type="match status" value="1"/>
</dbReference>
<dbReference type="Pfam" id="PF03054">
    <property type="entry name" value="tRNA_Me_trans"/>
    <property type="match status" value="1"/>
</dbReference>
<dbReference type="Pfam" id="PF20258">
    <property type="entry name" value="tRNA_Me_trans_C"/>
    <property type="match status" value="1"/>
</dbReference>
<dbReference type="Pfam" id="PF20259">
    <property type="entry name" value="tRNA_Me_trans_M"/>
    <property type="match status" value="1"/>
</dbReference>
<dbReference type="SUPFAM" id="SSF52402">
    <property type="entry name" value="Adenine nucleotide alpha hydrolases-like"/>
    <property type="match status" value="1"/>
</dbReference>
<comment type="function">
    <text evidence="1">Catalyzes the 2-thiolation of uridine at the wobble position (U34) of tRNA, leading to the formation of s(2)U34.</text>
</comment>
<comment type="catalytic activity">
    <reaction evidence="1">
        <text>S-sulfanyl-L-cysteinyl-[protein] + uridine(34) in tRNA + AH2 + ATP = 2-thiouridine(34) in tRNA + L-cysteinyl-[protein] + A + AMP + diphosphate + H(+)</text>
        <dbReference type="Rhea" id="RHEA:47032"/>
        <dbReference type="Rhea" id="RHEA-COMP:10131"/>
        <dbReference type="Rhea" id="RHEA-COMP:11726"/>
        <dbReference type="Rhea" id="RHEA-COMP:11727"/>
        <dbReference type="Rhea" id="RHEA-COMP:11728"/>
        <dbReference type="ChEBI" id="CHEBI:13193"/>
        <dbReference type="ChEBI" id="CHEBI:15378"/>
        <dbReference type="ChEBI" id="CHEBI:17499"/>
        <dbReference type="ChEBI" id="CHEBI:29950"/>
        <dbReference type="ChEBI" id="CHEBI:30616"/>
        <dbReference type="ChEBI" id="CHEBI:33019"/>
        <dbReference type="ChEBI" id="CHEBI:61963"/>
        <dbReference type="ChEBI" id="CHEBI:65315"/>
        <dbReference type="ChEBI" id="CHEBI:87170"/>
        <dbReference type="ChEBI" id="CHEBI:456215"/>
        <dbReference type="EC" id="2.8.1.13"/>
    </reaction>
</comment>
<comment type="subcellular location">
    <subcellularLocation>
        <location evidence="1">Cytoplasm</location>
    </subcellularLocation>
</comment>
<comment type="similarity">
    <text evidence="1">Belongs to the MnmA/TRMU family.</text>
</comment>
<evidence type="ECO:0000255" key="1">
    <source>
        <dbReference type="HAMAP-Rule" id="MF_00144"/>
    </source>
</evidence>
<proteinExistence type="inferred from homology"/>
<accession>Q73PV6</accession>
<gene>
    <name evidence="1" type="primary">mnmA</name>
    <name type="ordered locus">TDE_0690</name>
</gene>
<feature type="chain" id="PRO_0000349850" description="tRNA-specific 2-thiouridylase MnmA">
    <location>
        <begin position="1"/>
        <end position="366"/>
    </location>
</feature>
<feature type="region of interest" description="Interaction with tRNA" evidence="1">
    <location>
        <begin position="146"/>
        <end position="148"/>
    </location>
</feature>
<feature type="region of interest" description="Interaction with tRNA" evidence="1">
    <location>
        <begin position="302"/>
        <end position="303"/>
    </location>
</feature>
<feature type="active site" description="Nucleophile" evidence="1">
    <location>
        <position position="96"/>
    </location>
</feature>
<feature type="active site" description="Cysteine persulfide intermediate" evidence="1">
    <location>
        <position position="196"/>
    </location>
</feature>
<feature type="binding site" evidence="1">
    <location>
        <begin position="6"/>
        <end position="13"/>
    </location>
    <ligand>
        <name>ATP</name>
        <dbReference type="ChEBI" id="CHEBI:30616"/>
    </ligand>
</feature>
<feature type="binding site" evidence="1">
    <location>
        <position position="32"/>
    </location>
    <ligand>
        <name>ATP</name>
        <dbReference type="ChEBI" id="CHEBI:30616"/>
    </ligand>
</feature>
<feature type="binding site" evidence="1">
    <location>
        <position position="120"/>
    </location>
    <ligand>
        <name>ATP</name>
        <dbReference type="ChEBI" id="CHEBI:30616"/>
    </ligand>
</feature>
<feature type="site" description="Interaction with tRNA" evidence="1">
    <location>
        <position position="121"/>
    </location>
</feature>
<feature type="site" description="Interaction with tRNA" evidence="1">
    <location>
        <position position="341"/>
    </location>
</feature>
<feature type="disulfide bond" description="Alternate" evidence="1">
    <location>
        <begin position="96"/>
        <end position="196"/>
    </location>
</feature>
<organism>
    <name type="scientific">Treponema denticola (strain ATCC 35405 / DSM 14222 / CIP 103919 / JCM 8153 / KCTC 15104)</name>
    <dbReference type="NCBI Taxonomy" id="243275"/>
    <lineage>
        <taxon>Bacteria</taxon>
        <taxon>Pseudomonadati</taxon>
        <taxon>Spirochaetota</taxon>
        <taxon>Spirochaetia</taxon>
        <taxon>Spirochaetales</taxon>
        <taxon>Treponemataceae</taxon>
        <taxon>Treponema</taxon>
    </lineage>
</organism>
<name>MNMA_TREDE</name>
<reference key="1">
    <citation type="journal article" date="2004" name="Proc. Natl. Acad. Sci. U.S.A.">
        <title>Comparison of the genome of the oral pathogen Treponema denticola with other spirochete genomes.</title>
        <authorList>
            <person name="Seshadri R."/>
            <person name="Myers G.S.A."/>
            <person name="Tettelin H."/>
            <person name="Eisen J.A."/>
            <person name="Heidelberg J.F."/>
            <person name="Dodson R.J."/>
            <person name="Davidsen T.M."/>
            <person name="DeBoy R.T."/>
            <person name="Fouts D.E."/>
            <person name="Haft D.H."/>
            <person name="Selengut J."/>
            <person name="Ren Q."/>
            <person name="Brinkac L.M."/>
            <person name="Madupu R."/>
            <person name="Kolonay J.F."/>
            <person name="Durkin S.A."/>
            <person name="Daugherty S.C."/>
            <person name="Shetty J."/>
            <person name="Shvartsbeyn A."/>
            <person name="Gebregeorgis E."/>
            <person name="Geer K."/>
            <person name="Tsegaye G."/>
            <person name="Malek J.A."/>
            <person name="Ayodeji B."/>
            <person name="Shatsman S."/>
            <person name="McLeod M.P."/>
            <person name="Smajs D."/>
            <person name="Howell J.K."/>
            <person name="Pal S."/>
            <person name="Amin A."/>
            <person name="Vashisth P."/>
            <person name="McNeill T.Z."/>
            <person name="Xiang Q."/>
            <person name="Sodergren E."/>
            <person name="Baca E."/>
            <person name="Weinstock G.M."/>
            <person name="Norris S.J."/>
            <person name="Fraser C.M."/>
            <person name="Paulsen I.T."/>
        </authorList>
    </citation>
    <scope>NUCLEOTIDE SEQUENCE [LARGE SCALE GENOMIC DNA]</scope>
    <source>
        <strain>ATCC 35405 / DSM 14222 / CIP 103919 / JCM 8153 / KCTC 15104</strain>
    </source>
</reference>
<sequence>MKVLVGLSGGVDSAVAAKLLIDQGYDVTGVTMQLLPKLSGIYKEQTDDIEDAKKVADKLGIKHIVYDMRETFKTEIIDYFVEEYKQGRTPNPCFICNSKIKFGLFLEQALKDGFDKIATGHYAKIEKTEIEGDERFLLRQAEDAQKDQSYFLALLTQEQLSRSIFPLGDFTKEKVRSIAEDAGLINAHRPDSQDICFVPDDDYTRVINALAAGSFKEGKFIDTMGNEIGRHKGLQYYTIGQRRGLAIAMGYPVYVVKKDAKTNTVTVGKDEELFAESLIASRVNIILKKTIDKEIDIEVKTRYRQQKKKAKLIPLKNEEFKPTGKFKVEFIEPEKAVAEGQAAVFYTGDYIIGGGIIESVERLGIL</sequence>